<dbReference type="EMBL" id="CP000527">
    <property type="protein sequence ID" value="ABM28786.1"/>
    <property type="molecule type" value="Genomic_DNA"/>
</dbReference>
<dbReference type="RefSeq" id="WP_010938594.1">
    <property type="nucleotide sequence ID" value="NC_008751.1"/>
</dbReference>
<dbReference type="SMR" id="A1VEC0"/>
<dbReference type="KEGG" id="dvl:Dvul_1769"/>
<dbReference type="HOGENOM" id="CLU_072226_1_1_7"/>
<dbReference type="Proteomes" id="UP000009173">
    <property type="component" value="Chromosome"/>
</dbReference>
<dbReference type="GO" id="GO:0015935">
    <property type="term" value="C:small ribosomal subunit"/>
    <property type="evidence" value="ECO:0007669"/>
    <property type="project" value="InterPro"/>
</dbReference>
<dbReference type="GO" id="GO:0019843">
    <property type="term" value="F:rRNA binding"/>
    <property type="evidence" value="ECO:0007669"/>
    <property type="project" value="UniProtKB-UniRule"/>
</dbReference>
<dbReference type="GO" id="GO:0003735">
    <property type="term" value="F:structural constituent of ribosome"/>
    <property type="evidence" value="ECO:0007669"/>
    <property type="project" value="InterPro"/>
</dbReference>
<dbReference type="GO" id="GO:0000049">
    <property type="term" value="F:tRNA binding"/>
    <property type="evidence" value="ECO:0007669"/>
    <property type="project" value="UniProtKB-UniRule"/>
</dbReference>
<dbReference type="GO" id="GO:0006412">
    <property type="term" value="P:translation"/>
    <property type="evidence" value="ECO:0007669"/>
    <property type="project" value="UniProtKB-UniRule"/>
</dbReference>
<dbReference type="CDD" id="cd14869">
    <property type="entry name" value="uS7_Bacteria"/>
    <property type="match status" value="1"/>
</dbReference>
<dbReference type="FunFam" id="1.10.455.10:FF:000001">
    <property type="entry name" value="30S ribosomal protein S7"/>
    <property type="match status" value="1"/>
</dbReference>
<dbReference type="Gene3D" id="1.10.455.10">
    <property type="entry name" value="Ribosomal protein S7 domain"/>
    <property type="match status" value="1"/>
</dbReference>
<dbReference type="HAMAP" id="MF_00480_B">
    <property type="entry name" value="Ribosomal_uS7_B"/>
    <property type="match status" value="1"/>
</dbReference>
<dbReference type="InterPro" id="IPR000235">
    <property type="entry name" value="Ribosomal_uS7"/>
</dbReference>
<dbReference type="InterPro" id="IPR005717">
    <property type="entry name" value="Ribosomal_uS7_bac/org-type"/>
</dbReference>
<dbReference type="InterPro" id="IPR020606">
    <property type="entry name" value="Ribosomal_uS7_CS"/>
</dbReference>
<dbReference type="InterPro" id="IPR023798">
    <property type="entry name" value="Ribosomal_uS7_dom"/>
</dbReference>
<dbReference type="InterPro" id="IPR036823">
    <property type="entry name" value="Ribosomal_uS7_dom_sf"/>
</dbReference>
<dbReference type="NCBIfam" id="TIGR01029">
    <property type="entry name" value="rpsG_bact"/>
    <property type="match status" value="1"/>
</dbReference>
<dbReference type="PANTHER" id="PTHR11205">
    <property type="entry name" value="RIBOSOMAL PROTEIN S7"/>
    <property type="match status" value="1"/>
</dbReference>
<dbReference type="Pfam" id="PF00177">
    <property type="entry name" value="Ribosomal_S7"/>
    <property type="match status" value="1"/>
</dbReference>
<dbReference type="PIRSF" id="PIRSF002122">
    <property type="entry name" value="RPS7p_RPS7a_RPS5e_RPS7o"/>
    <property type="match status" value="1"/>
</dbReference>
<dbReference type="SUPFAM" id="SSF47973">
    <property type="entry name" value="Ribosomal protein S7"/>
    <property type="match status" value="1"/>
</dbReference>
<dbReference type="PROSITE" id="PS00052">
    <property type="entry name" value="RIBOSOMAL_S7"/>
    <property type="match status" value="1"/>
</dbReference>
<keyword id="KW-0687">Ribonucleoprotein</keyword>
<keyword id="KW-0689">Ribosomal protein</keyword>
<keyword id="KW-0694">RNA-binding</keyword>
<keyword id="KW-0699">rRNA-binding</keyword>
<keyword id="KW-0820">tRNA-binding</keyword>
<reference key="1">
    <citation type="journal article" date="2009" name="Environ. Microbiol.">
        <title>Contribution of mobile genetic elements to Desulfovibrio vulgaris genome plasticity.</title>
        <authorList>
            <person name="Walker C.B."/>
            <person name="Stolyar S."/>
            <person name="Chivian D."/>
            <person name="Pinel N."/>
            <person name="Gabster J.A."/>
            <person name="Dehal P.S."/>
            <person name="He Z."/>
            <person name="Yang Z.K."/>
            <person name="Yen H.C."/>
            <person name="Zhou J."/>
            <person name="Wall J.D."/>
            <person name="Hazen T.C."/>
            <person name="Arkin A.P."/>
            <person name="Stahl D.A."/>
        </authorList>
    </citation>
    <scope>NUCLEOTIDE SEQUENCE [LARGE SCALE GENOMIC DNA]</scope>
    <source>
        <strain>DP4</strain>
    </source>
</reference>
<sequence length="156" mass="17799">MPRKGPVPRREILPDPLYNSRLVARFINRLMYDGKKGAAEKIFYSALDTLAQKTGEEPLKAFEKAIENVKPHLEVKARRVGGATYQVPMEVRPDRQVSLSLRWLIAYSRSRGEKGMVSKLSAELLDAFNNRGGAVKKKEDTHRMAEANKAFAHYRW</sequence>
<protein>
    <recommendedName>
        <fullName evidence="1">Small ribosomal subunit protein uS7</fullName>
    </recommendedName>
    <alternativeName>
        <fullName evidence="2">30S ribosomal protein S7</fullName>
    </alternativeName>
</protein>
<evidence type="ECO:0000255" key="1">
    <source>
        <dbReference type="HAMAP-Rule" id="MF_00480"/>
    </source>
</evidence>
<evidence type="ECO:0000305" key="2"/>
<proteinExistence type="inferred from homology"/>
<name>RS7_NITV4</name>
<organism>
    <name type="scientific">Nitratidesulfovibrio vulgaris (strain DP4)</name>
    <name type="common">Desulfovibrio vulgaris</name>
    <dbReference type="NCBI Taxonomy" id="391774"/>
    <lineage>
        <taxon>Bacteria</taxon>
        <taxon>Pseudomonadati</taxon>
        <taxon>Thermodesulfobacteriota</taxon>
        <taxon>Desulfovibrionia</taxon>
        <taxon>Desulfovibrionales</taxon>
        <taxon>Desulfovibrionaceae</taxon>
        <taxon>Nitratidesulfovibrio</taxon>
    </lineage>
</organism>
<comment type="function">
    <text evidence="1">One of the primary rRNA binding proteins, it binds directly to 16S rRNA where it nucleates assembly of the head domain of the 30S subunit. Is located at the subunit interface close to the decoding center, probably blocks exit of the E-site tRNA.</text>
</comment>
<comment type="subunit">
    <text evidence="1">Part of the 30S ribosomal subunit. Contacts proteins S9 and S11.</text>
</comment>
<comment type="similarity">
    <text evidence="1">Belongs to the universal ribosomal protein uS7 family.</text>
</comment>
<feature type="chain" id="PRO_1000014185" description="Small ribosomal subunit protein uS7">
    <location>
        <begin position="1"/>
        <end position="156"/>
    </location>
</feature>
<accession>A1VEC0</accession>
<gene>
    <name evidence="1" type="primary">rpsG</name>
    <name type="ordered locus">Dvul_1769</name>
</gene>